<protein>
    <recommendedName>
        <fullName evidence="5">Non-selective voltage-gated ion channel VDAC2</fullName>
        <shortName>VDAC-2</shortName>
    </recommendedName>
    <alternativeName>
        <fullName>Outer mitochondrial membrane protein porin 2</fullName>
    </alternativeName>
</protein>
<reference key="1">
    <citation type="submission" date="2000-05" db="EMBL/GenBank/DDBJ databases">
        <title>Ion channels in the lens.</title>
        <authorList>
            <person name="Rae J.L."/>
        </authorList>
    </citation>
    <scope>NUCLEOTIDE SEQUENCE [MRNA]</scope>
    <source>
        <tissue>Lens</tissue>
    </source>
</reference>
<reference key="2">
    <citation type="journal article" date="2001" name="Biochim. Biophys. Acta">
        <title>VDAC2 (porin-2) expression pattern and localization in the bovine testis.</title>
        <authorList>
            <person name="Hinsch K.-D."/>
            <person name="Asmarinah X."/>
            <person name="Hinsch E."/>
            <person name="Konrad L."/>
        </authorList>
    </citation>
    <scope>NUCLEOTIDE SEQUENCE [MRNA]</scope>
    <source>
        <tissue>Testis</tissue>
    </source>
</reference>
<reference key="3">
    <citation type="journal article" date="2005" name="BMC Genomics">
        <title>Characterization of 954 bovine full-CDS cDNA sequences.</title>
        <authorList>
            <person name="Harhay G.P."/>
            <person name="Sonstegard T.S."/>
            <person name="Keele J.W."/>
            <person name="Heaton M.P."/>
            <person name="Clawson M.L."/>
            <person name="Snelling W.M."/>
            <person name="Wiedmann R.T."/>
            <person name="Van Tassell C.P."/>
            <person name="Smith T.P.L."/>
        </authorList>
    </citation>
    <scope>NUCLEOTIDE SEQUENCE [LARGE SCALE MRNA]</scope>
</reference>
<reference key="4">
    <citation type="submission" date="2005-08" db="EMBL/GenBank/DDBJ databases">
        <authorList>
            <consortium name="NIH - Mammalian Gene Collection (MGC) project"/>
        </authorList>
    </citation>
    <scope>NUCLEOTIDE SEQUENCE [LARGE SCALE MRNA]</scope>
    <source>
        <strain>Hereford</strain>
        <tissue>Kidney</tissue>
    </source>
</reference>
<comment type="function">
    <text evidence="2 3">Non-selective voltage-gated ion channel that mediates the transport of anions and cations through the mitochondrion outer membrane and plasma membrane (By similarity). The channel adopts an open conformation at zero mV and a closed conformation at both positive and negative potentials (By similarity). There are two populations of channels; the main that functions in a lower open-state conductance with lower ion selectivity, that switch, in a voltage-dependent manner, from the open to a low-conducting 'closed' state and the other that has a normal ion selectivity in the typical high conductance, 'open' state (By similarity). Binds various lipids, including the sphingolipid ceramide, the phospholipid phosphatidylcholine, and the sterols cholesterol and oxysterol (By similarity). Binding of ceramide promotes the mitochondrial outer membrane permeabilization (MOMP) apoptotic pathway (By similarity).</text>
</comment>
<comment type="function">
    <text evidence="2">Catalyzes the scrambling of phospholipids across the outer mitochondrial membrane; the mechanism is unrelated to channel activity and is capable of translocating both anionic and zwitterionic phospholipids.</text>
</comment>
<comment type="catalytic activity">
    <reaction evidence="3">
        <text>chloride(in) = chloride(out)</text>
        <dbReference type="Rhea" id="RHEA:29823"/>
        <dbReference type="ChEBI" id="CHEBI:17996"/>
    </reaction>
</comment>
<comment type="catalytic activity">
    <reaction evidence="3">
        <text>K(+)(in) = K(+)(out)</text>
        <dbReference type="Rhea" id="RHEA:29463"/>
        <dbReference type="ChEBI" id="CHEBI:29103"/>
    </reaction>
</comment>
<comment type="catalytic activity">
    <reaction evidence="2">
        <text>a 1,2-diacyl-sn-glycero-3-phospho-L-serine(in) = a 1,2-diacyl-sn-glycero-3-phospho-L-serine(out)</text>
        <dbReference type="Rhea" id="RHEA:38663"/>
        <dbReference type="ChEBI" id="CHEBI:57262"/>
    </reaction>
</comment>
<comment type="catalytic activity">
    <reaction evidence="2">
        <text>a 1,2-diacyl-sn-glycero-3-phosphocholine(in) = a 1,2-diacyl-sn-glycero-3-phosphocholine(out)</text>
        <dbReference type="Rhea" id="RHEA:38571"/>
        <dbReference type="ChEBI" id="CHEBI:57643"/>
    </reaction>
</comment>
<comment type="catalytic activity">
    <reaction evidence="2">
        <text>a 1,2-diacyl-sn-glycero-3-phospho-(1D-myo-inositol)(in) = a 1,2-diacyl-sn-glycero-3-phospho-(1D-myo-inositol)(out)</text>
        <dbReference type="Rhea" id="RHEA:38691"/>
        <dbReference type="ChEBI" id="CHEBI:57880"/>
    </reaction>
</comment>
<comment type="subunit">
    <text evidence="2 3">Monomer, homodimer and higher order oligomers; formation of higher order structures is necessary for scramblase activity (By similarity). Interacts with ARMC12 in a TBC1D21-dependent manner. Interacts with KLC3. Interacts with SPATA33. Interacts with PPP3CC in a SPATA33-dependent manner (By similarity).</text>
</comment>
<comment type="subcellular location">
    <subcellularLocation>
        <location evidence="2">Mitochondrion outer membrane</location>
    </subcellularLocation>
    <subcellularLocation>
        <location evidence="2">Membrane</location>
    </subcellularLocation>
    <text evidence="2">May localize to non-mitochondrial membranes.</text>
</comment>
<comment type="domain">
    <text evidence="1">Consists mainly of a membrane-spanning beta-barrel formed by 19 beta-strands.</text>
</comment>
<comment type="PTM">
    <text evidence="2">Ubiquitinated by PRKN during mitophagy, leading to its degradation and enhancement of mitophagy. Deubiquitinated by USP30.</text>
</comment>
<comment type="similarity">
    <text evidence="6">Belongs to the eukaryotic mitochondrial porin family.</text>
</comment>
<gene>
    <name evidence="5" type="primary">VDAC2</name>
</gene>
<proteinExistence type="evidence at transcript level"/>
<dbReference type="EMBL" id="AF268465">
    <property type="protein sequence ID" value="AAF80102.1"/>
    <property type="molecule type" value="mRNA"/>
</dbReference>
<dbReference type="EMBL" id="AJ288914">
    <property type="protein sequence ID" value="CAB94711.2"/>
    <property type="molecule type" value="mRNA"/>
</dbReference>
<dbReference type="EMBL" id="BT021018">
    <property type="protein sequence ID" value="AAX09035.1"/>
    <property type="molecule type" value="mRNA"/>
</dbReference>
<dbReference type="EMBL" id="BC102904">
    <property type="protein sequence ID" value="AAI02905.1"/>
    <property type="molecule type" value="mRNA"/>
</dbReference>
<dbReference type="RefSeq" id="NP_776911.2">
    <property type="nucleotide sequence ID" value="NM_174486.3"/>
</dbReference>
<dbReference type="SMR" id="P68002"/>
<dbReference type="FunCoup" id="P68002">
    <property type="interactions" value="3142"/>
</dbReference>
<dbReference type="IntAct" id="P68002">
    <property type="interactions" value="1"/>
</dbReference>
<dbReference type="STRING" id="9913.ENSBTAP00000017251"/>
<dbReference type="GlyGen" id="P68002">
    <property type="glycosylation" value="1 site, 1 O-linked glycan (1 site)"/>
</dbReference>
<dbReference type="PaxDb" id="9913-ENSBTAP00000017251"/>
<dbReference type="PeptideAtlas" id="P68002"/>
<dbReference type="Ensembl" id="ENSBTAT00000098979.1">
    <property type="protein sequence ID" value="ENSBTAP00000086816.1"/>
    <property type="gene ID" value="ENSBTAG00000012975.4"/>
</dbReference>
<dbReference type="GeneID" id="282120"/>
<dbReference type="KEGG" id="bta:282120"/>
<dbReference type="CTD" id="7417"/>
<dbReference type="VEuPathDB" id="HostDB:ENSBTAG00000012975"/>
<dbReference type="VGNC" id="VGNC:36783">
    <property type="gene designation" value="VDAC2"/>
</dbReference>
<dbReference type="eggNOG" id="KOG3126">
    <property type="taxonomic scope" value="Eukaryota"/>
</dbReference>
<dbReference type="GeneTree" id="ENSGT00950000182869"/>
<dbReference type="HOGENOM" id="CLU_044399_2_0_1"/>
<dbReference type="InParanoid" id="P68002"/>
<dbReference type="OMA" id="FKQPAFH"/>
<dbReference type="OrthoDB" id="7827681at2759"/>
<dbReference type="TreeFam" id="TF315091"/>
<dbReference type="Reactome" id="R-BTA-5205685">
    <property type="pathway name" value="PINK1-PRKN Mediated Mitophagy"/>
</dbReference>
<dbReference type="Reactome" id="R-BTA-5689880">
    <property type="pathway name" value="Ub-specific processing proteases"/>
</dbReference>
<dbReference type="CD-CODE" id="D7FE2080">
    <property type="entry name" value="Nucleolus"/>
</dbReference>
<dbReference type="Proteomes" id="UP000009136">
    <property type="component" value="Chromosome 28"/>
</dbReference>
<dbReference type="Bgee" id="ENSBTAG00000012975">
    <property type="expression patterns" value="Expressed in cardiac atrium and 105 other cell types or tissues"/>
</dbReference>
<dbReference type="GO" id="GO:0016020">
    <property type="term" value="C:membrane"/>
    <property type="evidence" value="ECO:0000250"/>
    <property type="project" value="UniProtKB"/>
</dbReference>
<dbReference type="GO" id="GO:0005741">
    <property type="term" value="C:mitochondrial outer membrane"/>
    <property type="evidence" value="ECO:0000250"/>
    <property type="project" value="UniProtKB"/>
</dbReference>
<dbReference type="GO" id="GO:0005739">
    <property type="term" value="C:mitochondrion"/>
    <property type="evidence" value="ECO:0000314"/>
    <property type="project" value="AgBase"/>
</dbReference>
<dbReference type="GO" id="GO:0046930">
    <property type="term" value="C:pore complex"/>
    <property type="evidence" value="ECO:0007669"/>
    <property type="project" value="UniProtKB-KW"/>
</dbReference>
<dbReference type="GO" id="GO:0097225">
    <property type="term" value="C:sperm midpiece"/>
    <property type="evidence" value="ECO:0000250"/>
    <property type="project" value="UniProtKB"/>
</dbReference>
<dbReference type="GO" id="GO:0005524">
    <property type="term" value="F:ATP binding"/>
    <property type="evidence" value="ECO:0007669"/>
    <property type="project" value="UniProtKB-KW"/>
</dbReference>
<dbReference type="GO" id="GO:0097001">
    <property type="term" value="F:ceramide binding"/>
    <property type="evidence" value="ECO:0000250"/>
    <property type="project" value="UniProtKB"/>
</dbReference>
<dbReference type="GO" id="GO:0015485">
    <property type="term" value="F:cholesterol binding"/>
    <property type="evidence" value="ECO:0000250"/>
    <property type="project" value="UniProtKB"/>
</dbReference>
<dbReference type="GO" id="GO:0008142">
    <property type="term" value="F:oxysterol binding"/>
    <property type="evidence" value="ECO:0000250"/>
    <property type="project" value="UniProtKB"/>
</dbReference>
<dbReference type="GO" id="GO:0031210">
    <property type="term" value="F:phosphatidylcholine binding"/>
    <property type="evidence" value="ECO:0000250"/>
    <property type="project" value="UniProtKB"/>
</dbReference>
<dbReference type="GO" id="GO:0015288">
    <property type="term" value="F:porin activity"/>
    <property type="evidence" value="ECO:0007669"/>
    <property type="project" value="UniProtKB-KW"/>
</dbReference>
<dbReference type="GO" id="GO:0008308">
    <property type="term" value="F:voltage-gated monoatomic anion channel activity"/>
    <property type="evidence" value="ECO:0000318"/>
    <property type="project" value="GO_Central"/>
</dbReference>
<dbReference type="GO" id="GO:0005244">
    <property type="term" value="F:voltage-gated monoatomic ion channel activity"/>
    <property type="evidence" value="ECO:0000250"/>
    <property type="project" value="UniProtKB"/>
</dbReference>
<dbReference type="GO" id="GO:0006869">
    <property type="term" value="P:lipid transport"/>
    <property type="evidence" value="ECO:0007669"/>
    <property type="project" value="UniProtKB-KW"/>
</dbReference>
<dbReference type="GO" id="GO:0097345">
    <property type="term" value="P:mitochondrial outer membrane permeabilization"/>
    <property type="evidence" value="ECO:0000250"/>
    <property type="project" value="UniProtKB"/>
</dbReference>
<dbReference type="GO" id="GO:0006820">
    <property type="term" value="P:monoatomic anion transport"/>
    <property type="evidence" value="ECO:0000250"/>
    <property type="project" value="UniProtKB"/>
</dbReference>
<dbReference type="CDD" id="cd07306">
    <property type="entry name" value="Porin3_VDAC"/>
    <property type="match status" value="1"/>
</dbReference>
<dbReference type="FunFam" id="2.40.160.10:FF:000001">
    <property type="entry name" value="Voltage-dependent anion-selective channel protein 2"/>
    <property type="match status" value="1"/>
</dbReference>
<dbReference type="Gene3D" id="2.40.160.10">
    <property type="entry name" value="Porin"/>
    <property type="match status" value="1"/>
</dbReference>
<dbReference type="InterPro" id="IPR023614">
    <property type="entry name" value="Porin_dom_sf"/>
</dbReference>
<dbReference type="InterPro" id="IPR001925">
    <property type="entry name" value="Porin_Euk"/>
</dbReference>
<dbReference type="InterPro" id="IPR027246">
    <property type="entry name" value="Porin_Euk/Tom40"/>
</dbReference>
<dbReference type="PANTHER" id="PTHR11743">
    <property type="entry name" value="VOLTAGE-DEPENDENT ANION-SELECTIVE CHANNEL"/>
    <property type="match status" value="1"/>
</dbReference>
<dbReference type="PANTHER" id="PTHR11743:SF12">
    <property type="entry name" value="VOLTAGE-DEPENDENT ANION-SELECTIVE CHANNEL PROTEIN 2"/>
    <property type="match status" value="1"/>
</dbReference>
<dbReference type="Pfam" id="PF01459">
    <property type="entry name" value="Porin_3"/>
    <property type="match status" value="1"/>
</dbReference>
<dbReference type="PRINTS" id="PR00185">
    <property type="entry name" value="EUKARYTPORIN"/>
</dbReference>
<dbReference type="PROSITE" id="PS00558">
    <property type="entry name" value="EUKARYOTIC_PORIN"/>
    <property type="match status" value="1"/>
</dbReference>
<feature type="initiator methionine" description="Removed" evidence="2">
    <location>
        <position position="1"/>
    </location>
</feature>
<feature type="chain" id="PRO_0000050504" description="Non-selective voltage-gated ion channel VDAC2">
    <location>
        <begin position="2"/>
        <end position="294"/>
    </location>
</feature>
<feature type="transmembrane region" description="Beta stranded" evidence="1">
    <location>
        <begin position="37"/>
        <end position="46"/>
    </location>
</feature>
<feature type="transmembrane region" description="Beta stranded" evidence="1">
    <location>
        <begin position="50"/>
        <end position="58"/>
    </location>
</feature>
<feature type="transmembrane region" description="Beta stranded" evidence="1">
    <location>
        <begin position="65"/>
        <end position="75"/>
    </location>
</feature>
<feature type="transmembrane region" description="Beta stranded" evidence="1">
    <location>
        <begin position="80"/>
        <end position="87"/>
    </location>
</feature>
<feature type="transmembrane region" description="Beta stranded" evidence="1">
    <location>
        <begin position="91"/>
        <end position="100"/>
    </location>
</feature>
<feature type="transmembrane region" description="Beta stranded" evidence="1">
    <location>
        <begin position="106"/>
        <end position="115"/>
    </location>
</feature>
<feature type="transmembrane region" description="Beta stranded" evidence="1">
    <location>
        <begin position="122"/>
        <end position="131"/>
    </location>
</feature>
<feature type="transmembrane region" description="Beta stranded" evidence="1">
    <location>
        <begin position="134"/>
        <end position="141"/>
    </location>
</feature>
<feature type="transmembrane region" description="Beta stranded" evidence="1">
    <location>
        <begin position="148"/>
        <end position="156"/>
    </location>
</feature>
<feature type="transmembrane region" description="Beta stranded" evidence="1">
    <location>
        <begin position="161"/>
        <end position="169"/>
    </location>
</feature>
<feature type="transmembrane region" description="Beta stranded" evidence="1">
    <location>
        <begin position="174"/>
        <end position="186"/>
    </location>
</feature>
<feature type="transmembrane region" description="Beta stranded" evidence="1">
    <location>
        <begin position="189"/>
        <end position="196"/>
    </location>
</feature>
<feature type="transmembrane region" description="Beta stranded" evidence="1">
    <location>
        <begin position="200"/>
        <end position="209"/>
    </location>
</feature>
<feature type="transmembrane region" description="Beta stranded" evidence="1">
    <location>
        <begin position="213"/>
        <end position="222"/>
    </location>
</feature>
<feature type="transmembrane region" description="Beta stranded" evidence="1">
    <location>
        <begin position="229"/>
        <end position="238"/>
    </location>
</feature>
<feature type="transmembrane region" description="Beta stranded" evidence="1">
    <location>
        <begin position="242"/>
        <end position="249"/>
    </location>
</feature>
<feature type="transmembrane region" description="Beta stranded" evidence="1">
    <location>
        <begin position="253"/>
        <end position="262"/>
    </location>
</feature>
<feature type="transmembrane region" description="Beta stranded" evidence="1">
    <location>
        <begin position="265"/>
        <end position="274"/>
    </location>
</feature>
<feature type="transmembrane region" description="Beta stranded" evidence="1">
    <location>
        <begin position="284"/>
        <end position="293"/>
    </location>
</feature>
<feature type="binding site" evidence="4">
    <location>
        <position position="23"/>
    </location>
    <ligand>
        <name>ATP</name>
        <dbReference type="ChEBI" id="CHEBI:30616"/>
    </ligand>
</feature>
<feature type="binding site" evidence="4">
    <location>
        <position position="31"/>
    </location>
    <ligand>
        <name>ATP</name>
        <dbReference type="ChEBI" id="CHEBI:30616"/>
    </ligand>
</feature>
<feature type="binding site" evidence="1">
    <location>
        <begin position="253"/>
        <end position="255"/>
    </location>
    <ligand>
        <name>NAD(+)</name>
        <dbReference type="ChEBI" id="CHEBI:57540"/>
    </ligand>
</feature>
<feature type="binding site" evidence="1">
    <location>
        <begin position="271"/>
        <end position="275"/>
    </location>
    <ligand>
        <name>NAD(+)</name>
        <dbReference type="ChEBI" id="CHEBI:57540"/>
    </ligand>
</feature>
<feature type="site" description="Involved in ceramide and phosphatidylcholine binding" evidence="2">
    <location>
        <position position="85"/>
    </location>
</feature>
<feature type="modified residue" description="N-acetylalanine" evidence="2">
    <location>
        <position position="2"/>
    </location>
</feature>
<feature type="modified residue" description="N6-acetyllysine; alternate" evidence="2">
    <location>
        <position position="31"/>
    </location>
</feature>
<feature type="modified residue" description="N6-succinyllysine; alternate" evidence="3">
    <location>
        <position position="31"/>
    </location>
</feature>
<feature type="modified residue" description="Phosphotyrosine" evidence="4">
    <location>
        <position position="78"/>
    </location>
</feature>
<feature type="modified residue" description="Phosphothreonine" evidence="1">
    <location>
        <position position="118"/>
    </location>
</feature>
<feature type="modified residue" description="N6-acetyllysine; alternate" evidence="3">
    <location>
        <position position="120"/>
    </location>
</feature>
<feature type="modified residue" description="Phosphoserine" evidence="1">
    <location>
        <position position="251"/>
    </location>
</feature>
<feature type="modified residue" description="N6-acetyllysine; alternate" evidence="1">
    <location>
        <position position="277"/>
    </location>
</feature>
<feature type="cross-link" description="Glycyl lysine isopeptide (Lys-Gly) (interchain with G-Cter in ubiquitin); alternate" evidence="2">
    <location>
        <position position="31"/>
    </location>
</feature>
<feature type="cross-link" description="Glycyl lysine isopeptide (Lys-Gly) (interchain with G-Cter in ubiquitin)" evidence="2">
    <location>
        <position position="64"/>
    </location>
</feature>
<feature type="cross-link" description="Glycyl lysine isopeptide (Lys-Gly) (interchain with G-Cter in ubiquitin); alternate" evidence="2">
    <location>
        <position position="120"/>
    </location>
</feature>
<feature type="cross-link" description="Glycyl lysine isopeptide (Lys-Gly) (interchain with G-Cter in ubiquitin)" evidence="2">
    <location>
        <position position="121"/>
    </location>
</feature>
<feature type="cross-link" description="Glycyl lysine isopeptide (Lys-Gly) (interchain with G-Cter in ubiquitin)" evidence="1">
    <location>
        <position position="172"/>
    </location>
</feature>
<feature type="cross-link" description="Glycyl lysine isopeptide (Lys-Gly) (interchain with G-Cter in ubiquitin); alternate" evidence="2">
    <location>
        <position position="277"/>
    </location>
</feature>
<feature type="sequence conflict" description="In Ref. 1; AAF80102 and 2; CAB94711." evidence="6" ref="1 2">
    <original>Y</original>
    <variation>H</variation>
    <location>
        <position position="4"/>
    </location>
</feature>
<feature type="sequence conflict" description="In Ref. 1; AAF80102." evidence="6" ref="1">
    <original>N</original>
    <variation>T</variation>
    <location>
        <position position="7"/>
    </location>
</feature>
<feature type="sequence conflict" description="In Ref. 2; CAB94711." evidence="6" ref="2">
    <original>A</original>
    <variation>P</variation>
    <location>
        <position position="289"/>
    </location>
</feature>
<sequence length="294" mass="31620">MATYGQNCARPMCIPPSYADLGKAARDIFNKGFGFGLVKLDVKTKSCSGVEFSTSGSSNTDTGKVTGTLETKYKWCEYGLTFTEKWNTDNTLGTEIAIEDQICQGLKLTFDTTFSPNTGKKSGKIKSSYKRECINLGCDVDFDFAGPAIHGSAVFGYEGWLAGYQMTFDSAKSKLTRNNFAVGYRTGDFQLHTNVNDGTEFGGSIYQKVCEDLDTSVNLAWTSGTNCTRFGIAAKYQLDPTASISAKVNNSSLIGVGYTQTLRPGVKLTLSALVDGKSINAGGHKLGLALELEA</sequence>
<organism>
    <name type="scientific">Bos taurus</name>
    <name type="common">Bovine</name>
    <dbReference type="NCBI Taxonomy" id="9913"/>
    <lineage>
        <taxon>Eukaryota</taxon>
        <taxon>Metazoa</taxon>
        <taxon>Chordata</taxon>
        <taxon>Craniata</taxon>
        <taxon>Vertebrata</taxon>
        <taxon>Euteleostomi</taxon>
        <taxon>Mammalia</taxon>
        <taxon>Eutheria</taxon>
        <taxon>Laurasiatheria</taxon>
        <taxon>Artiodactyla</taxon>
        <taxon>Ruminantia</taxon>
        <taxon>Pecora</taxon>
        <taxon>Bovidae</taxon>
        <taxon>Bovinae</taxon>
        <taxon>Bos</taxon>
    </lineage>
</organism>
<accession>P68002</accession>
<accession>Q5E9A2</accession>
<accession>Q9MYV7</accession>
<accession>Q9TT14</accession>
<evidence type="ECO:0000250" key="1">
    <source>
        <dbReference type="UniProtKB" id="P21796"/>
    </source>
</evidence>
<evidence type="ECO:0000250" key="2">
    <source>
        <dbReference type="UniProtKB" id="P45880"/>
    </source>
</evidence>
<evidence type="ECO:0000250" key="3">
    <source>
        <dbReference type="UniProtKB" id="Q60930"/>
    </source>
</evidence>
<evidence type="ECO:0000250" key="4">
    <source>
        <dbReference type="UniProtKB" id="Q60932"/>
    </source>
</evidence>
<evidence type="ECO:0000250" key="5">
    <source>
        <dbReference type="UniProtKB" id="Q9Y5I6"/>
    </source>
</evidence>
<evidence type="ECO:0000305" key="6"/>
<name>VDAC2_BOVIN</name>
<keyword id="KW-0007">Acetylation</keyword>
<keyword id="KW-0067">ATP-binding</keyword>
<keyword id="KW-0406">Ion transport</keyword>
<keyword id="KW-1017">Isopeptide bond</keyword>
<keyword id="KW-0445">Lipid transport</keyword>
<keyword id="KW-0446">Lipid-binding</keyword>
<keyword id="KW-0472">Membrane</keyword>
<keyword id="KW-0496">Mitochondrion</keyword>
<keyword id="KW-1000">Mitochondrion outer membrane</keyword>
<keyword id="KW-0520">NAD</keyword>
<keyword id="KW-0547">Nucleotide-binding</keyword>
<keyword id="KW-0597">Phosphoprotein</keyword>
<keyword id="KW-0626">Porin</keyword>
<keyword id="KW-1185">Reference proteome</keyword>
<keyword id="KW-0812">Transmembrane</keyword>
<keyword id="KW-1134">Transmembrane beta strand</keyword>
<keyword id="KW-0813">Transport</keyword>
<keyword id="KW-0832">Ubl conjugation</keyword>